<evidence type="ECO:0000255" key="1">
    <source>
        <dbReference type="HAMAP-Rule" id="MF_00480"/>
    </source>
</evidence>
<evidence type="ECO:0000305" key="2"/>
<dbReference type="EMBL" id="CU207211">
    <property type="protein sequence ID" value="CAL63279.1"/>
    <property type="molecule type" value="Genomic_DNA"/>
</dbReference>
<dbReference type="SMR" id="A4G9U2"/>
<dbReference type="STRING" id="204773.HEAR3170"/>
<dbReference type="KEGG" id="har:HEAR3170"/>
<dbReference type="eggNOG" id="COG0049">
    <property type="taxonomic scope" value="Bacteria"/>
</dbReference>
<dbReference type="HOGENOM" id="CLU_072226_1_1_4"/>
<dbReference type="OrthoDB" id="9807653at2"/>
<dbReference type="Proteomes" id="UP000006697">
    <property type="component" value="Chromosome"/>
</dbReference>
<dbReference type="GO" id="GO:0015935">
    <property type="term" value="C:small ribosomal subunit"/>
    <property type="evidence" value="ECO:0007669"/>
    <property type="project" value="InterPro"/>
</dbReference>
<dbReference type="GO" id="GO:0019843">
    <property type="term" value="F:rRNA binding"/>
    <property type="evidence" value="ECO:0007669"/>
    <property type="project" value="UniProtKB-UniRule"/>
</dbReference>
<dbReference type="GO" id="GO:0003735">
    <property type="term" value="F:structural constituent of ribosome"/>
    <property type="evidence" value="ECO:0007669"/>
    <property type="project" value="InterPro"/>
</dbReference>
<dbReference type="GO" id="GO:0000049">
    <property type="term" value="F:tRNA binding"/>
    <property type="evidence" value="ECO:0007669"/>
    <property type="project" value="UniProtKB-UniRule"/>
</dbReference>
<dbReference type="GO" id="GO:0006412">
    <property type="term" value="P:translation"/>
    <property type="evidence" value="ECO:0007669"/>
    <property type="project" value="UniProtKB-UniRule"/>
</dbReference>
<dbReference type="CDD" id="cd14869">
    <property type="entry name" value="uS7_Bacteria"/>
    <property type="match status" value="1"/>
</dbReference>
<dbReference type="FunFam" id="1.10.455.10:FF:000001">
    <property type="entry name" value="30S ribosomal protein S7"/>
    <property type="match status" value="1"/>
</dbReference>
<dbReference type="Gene3D" id="1.10.455.10">
    <property type="entry name" value="Ribosomal protein S7 domain"/>
    <property type="match status" value="1"/>
</dbReference>
<dbReference type="HAMAP" id="MF_00480_B">
    <property type="entry name" value="Ribosomal_uS7_B"/>
    <property type="match status" value="1"/>
</dbReference>
<dbReference type="InterPro" id="IPR000235">
    <property type="entry name" value="Ribosomal_uS7"/>
</dbReference>
<dbReference type="InterPro" id="IPR005717">
    <property type="entry name" value="Ribosomal_uS7_bac/org-type"/>
</dbReference>
<dbReference type="InterPro" id="IPR020606">
    <property type="entry name" value="Ribosomal_uS7_CS"/>
</dbReference>
<dbReference type="InterPro" id="IPR023798">
    <property type="entry name" value="Ribosomal_uS7_dom"/>
</dbReference>
<dbReference type="InterPro" id="IPR036823">
    <property type="entry name" value="Ribosomal_uS7_dom_sf"/>
</dbReference>
<dbReference type="NCBIfam" id="TIGR01029">
    <property type="entry name" value="rpsG_bact"/>
    <property type="match status" value="1"/>
</dbReference>
<dbReference type="PANTHER" id="PTHR11205">
    <property type="entry name" value="RIBOSOMAL PROTEIN S7"/>
    <property type="match status" value="1"/>
</dbReference>
<dbReference type="Pfam" id="PF00177">
    <property type="entry name" value="Ribosomal_S7"/>
    <property type="match status" value="1"/>
</dbReference>
<dbReference type="PIRSF" id="PIRSF002122">
    <property type="entry name" value="RPS7p_RPS7a_RPS5e_RPS7o"/>
    <property type="match status" value="1"/>
</dbReference>
<dbReference type="SUPFAM" id="SSF47973">
    <property type="entry name" value="Ribosomal protein S7"/>
    <property type="match status" value="1"/>
</dbReference>
<dbReference type="PROSITE" id="PS00052">
    <property type="entry name" value="RIBOSOMAL_S7"/>
    <property type="match status" value="1"/>
</dbReference>
<keyword id="KW-1185">Reference proteome</keyword>
<keyword id="KW-0687">Ribonucleoprotein</keyword>
<keyword id="KW-0689">Ribosomal protein</keyword>
<keyword id="KW-0694">RNA-binding</keyword>
<keyword id="KW-0699">rRNA-binding</keyword>
<keyword id="KW-0820">tRNA-binding</keyword>
<accession>A4G9U2</accession>
<proteinExistence type="inferred from homology"/>
<feature type="chain" id="PRO_1000014206" description="Small ribosomal subunit protein uS7">
    <location>
        <begin position="1"/>
        <end position="156"/>
    </location>
</feature>
<organism>
    <name type="scientific">Herminiimonas arsenicoxydans</name>
    <dbReference type="NCBI Taxonomy" id="204773"/>
    <lineage>
        <taxon>Bacteria</taxon>
        <taxon>Pseudomonadati</taxon>
        <taxon>Pseudomonadota</taxon>
        <taxon>Betaproteobacteria</taxon>
        <taxon>Burkholderiales</taxon>
        <taxon>Oxalobacteraceae</taxon>
        <taxon>Herminiimonas</taxon>
    </lineage>
</organism>
<sequence length="156" mass="17689">MPRRREVPKRDILPDPKFGNVDVAKFVNVLMLSGKKSVAENIIYGAFEHIQTKSGKDPLEVFTAAILNCKPLVEVKSRRVGGANYQVPVEVRPVRRMALSMRWLREAANKRSEKSMPQRLAGELLEAAESRGGAMKKRDEVHRMAEANKAFSHFRF</sequence>
<name>RS7_HERAR</name>
<gene>
    <name evidence="1" type="primary">rpsG</name>
    <name type="ordered locus">HEAR3170</name>
</gene>
<protein>
    <recommendedName>
        <fullName evidence="1">Small ribosomal subunit protein uS7</fullName>
    </recommendedName>
    <alternativeName>
        <fullName evidence="2">30S ribosomal protein S7</fullName>
    </alternativeName>
</protein>
<comment type="function">
    <text evidence="1">One of the primary rRNA binding proteins, it binds directly to 16S rRNA where it nucleates assembly of the head domain of the 30S subunit. Is located at the subunit interface close to the decoding center, probably blocks exit of the E-site tRNA.</text>
</comment>
<comment type="subunit">
    <text evidence="1">Part of the 30S ribosomal subunit. Contacts proteins S9 and S11.</text>
</comment>
<comment type="similarity">
    <text evidence="1">Belongs to the universal ribosomal protein uS7 family.</text>
</comment>
<reference key="1">
    <citation type="journal article" date="2007" name="PLoS Genet.">
        <title>A tale of two oxidation states: bacterial colonization of arsenic-rich environments.</title>
        <authorList>
            <person name="Muller D."/>
            <person name="Medigue C."/>
            <person name="Koechler S."/>
            <person name="Barbe V."/>
            <person name="Barakat M."/>
            <person name="Talla E."/>
            <person name="Bonnefoy V."/>
            <person name="Krin E."/>
            <person name="Arsene-Ploetze F."/>
            <person name="Carapito C."/>
            <person name="Chandler M."/>
            <person name="Cournoyer B."/>
            <person name="Cruveiller S."/>
            <person name="Dossat C."/>
            <person name="Duval S."/>
            <person name="Heymann M."/>
            <person name="Leize E."/>
            <person name="Lieutaud A."/>
            <person name="Lievremont D."/>
            <person name="Makita Y."/>
            <person name="Mangenot S."/>
            <person name="Nitschke W."/>
            <person name="Ortet P."/>
            <person name="Perdrial N."/>
            <person name="Schoepp B."/>
            <person name="Siguier P."/>
            <person name="Simeonova D.D."/>
            <person name="Rouy Z."/>
            <person name="Segurens B."/>
            <person name="Turlin E."/>
            <person name="Vallenet D."/>
            <person name="van Dorsselaer A."/>
            <person name="Weiss S."/>
            <person name="Weissenbach J."/>
            <person name="Lett M.-C."/>
            <person name="Danchin A."/>
            <person name="Bertin P.N."/>
        </authorList>
    </citation>
    <scope>NUCLEOTIDE SEQUENCE [LARGE SCALE GENOMIC DNA]</scope>
    <source>
        <strain>ULPAs1</strain>
    </source>
</reference>